<accession>Q73GG3</accession>
<keyword id="KW-0414">Isoprene biosynthesis</keyword>
<keyword id="KW-0464">Manganese</keyword>
<keyword id="KW-0479">Metal-binding</keyword>
<keyword id="KW-0521">NADP</keyword>
<keyword id="KW-0560">Oxidoreductase</keyword>
<organism>
    <name type="scientific">Wolbachia pipientis wMel</name>
    <dbReference type="NCBI Taxonomy" id="163164"/>
    <lineage>
        <taxon>Bacteria</taxon>
        <taxon>Pseudomonadati</taxon>
        <taxon>Pseudomonadota</taxon>
        <taxon>Alphaproteobacteria</taxon>
        <taxon>Rickettsiales</taxon>
        <taxon>Anaplasmataceae</taxon>
        <taxon>Wolbachieae</taxon>
        <taxon>Wolbachia</taxon>
    </lineage>
</organism>
<protein>
    <recommendedName>
        <fullName evidence="1">1-deoxy-D-xylulose 5-phosphate reductoisomerase</fullName>
        <shortName evidence="1">DXP reductoisomerase</shortName>
        <ecNumber evidence="1">1.1.1.267</ecNumber>
    </recommendedName>
    <alternativeName>
        <fullName evidence="1">1-deoxyxylulose-5-phosphate reductoisomerase</fullName>
    </alternativeName>
    <alternativeName>
        <fullName evidence="1">2-C-methyl-D-erythritol 4-phosphate synthase</fullName>
    </alternativeName>
</protein>
<dbReference type="EC" id="1.1.1.267" evidence="1"/>
<dbReference type="EMBL" id="AE017196">
    <property type="protein sequence ID" value="AAS14653.1"/>
    <property type="molecule type" value="Genomic_DNA"/>
</dbReference>
<dbReference type="RefSeq" id="WP_010962970.1">
    <property type="nucleotide sequence ID" value="NZ_OX384529.1"/>
</dbReference>
<dbReference type="SMR" id="Q73GG3"/>
<dbReference type="EnsemblBacteria" id="AAS14653">
    <property type="protein sequence ID" value="AAS14653"/>
    <property type="gene ID" value="WD_0992"/>
</dbReference>
<dbReference type="GeneID" id="70036465"/>
<dbReference type="KEGG" id="wol:WD_0992"/>
<dbReference type="eggNOG" id="COG0743">
    <property type="taxonomic scope" value="Bacteria"/>
</dbReference>
<dbReference type="UniPathway" id="UPA00056">
    <property type="reaction ID" value="UER00092"/>
</dbReference>
<dbReference type="Proteomes" id="UP000008215">
    <property type="component" value="Chromosome"/>
</dbReference>
<dbReference type="GO" id="GO:0030604">
    <property type="term" value="F:1-deoxy-D-xylulose-5-phosphate reductoisomerase activity"/>
    <property type="evidence" value="ECO:0007669"/>
    <property type="project" value="UniProtKB-UniRule"/>
</dbReference>
<dbReference type="GO" id="GO:0030145">
    <property type="term" value="F:manganese ion binding"/>
    <property type="evidence" value="ECO:0007669"/>
    <property type="project" value="TreeGrafter"/>
</dbReference>
<dbReference type="GO" id="GO:0070402">
    <property type="term" value="F:NADPH binding"/>
    <property type="evidence" value="ECO:0007669"/>
    <property type="project" value="InterPro"/>
</dbReference>
<dbReference type="GO" id="GO:0051484">
    <property type="term" value="P:isopentenyl diphosphate biosynthetic process, methylerythritol 4-phosphate pathway involved in terpenoid biosynthetic process"/>
    <property type="evidence" value="ECO:0007669"/>
    <property type="project" value="TreeGrafter"/>
</dbReference>
<dbReference type="FunFam" id="3.40.50.720:FF:000045">
    <property type="entry name" value="1-deoxy-D-xylulose 5-phosphate reductoisomerase"/>
    <property type="match status" value="1"/>
</dbReference>
<dbReference type="Gene3D" id="1.10.1740.10">
    <property type="match status" value="1"/>
</dbReference>
<dbReference type="Gene3D" id="3.40.50.720">
    <property type="entry name" value="NAD(P)-binding Rossmann-like Domain"/>
    <property type="match status" value="1"/>
</dbReference>
<dbReference type="HAMAP" id="MF_00183">
    <property type="entry name" value="DXP_reductoisom"/>
    <property type="match status" value="1"/>
</dbReference>
<dbReference type="InterPro" id="IPR003821">
    <property type="entry name" value="DXP_reductoisomerase"/>
</dbReference>
<dbReference type="InterPro" id="IPR013644">
    <property type="entry name" value="DXP_reductoisomerase_C"/>
</dbReference>
<dbReference type="InterPro" id="IPR013512">
    <property type="entry name" value="DXP_reductoisomerase_N"/>
</dbReference>
<dbReference type="InterPro" id="IPR026877">
    <property type="entry name" value="DXPR_C"/>
</dbReference>
<dbReference type="InterPro" id="IPR036169">
    <property type="entry name" value="DXPR_C_sf"/>
</dbReference>
<dbReference type="InterPro" id="IPR036291">
    <property type="entry name" value="NAD(P)-bd_dom_sf"/>
</dbReference>
<dbReference type="NCBIfam" id="TIGR00243">
    <property type="entry name" value="Dxr"/>
    <property type="match status" value="1"/>
</dbReference>
<dbReference type="PANTHER" id="PTHR30525">
    <property type="entry name" value="1-DEOXY-D-XYLULOSE 5-PHOSPHATE REDUCTOISOMERASE"/>
    <property type="match status" value="1"/>
</dbReference>
<dbReference type="PANTHER" id="PTHR30525:SF0">
    <property type="entry name" value="1-DEOXY-D-XYLULOSE 5-PHOSPHATE REDUCTOISOMERASE, CHLOROPLASTIC"/>
    <property type="match status" value="1"/>
</dbReference>
<dbReference type="Pfam" id="PF08436">
    <property type="entry name" value="DXP_redisom_C"/>
    <property type="match status" value="1"/>
</dbReference>
<dbReference type="Pfam" id="PF02670">
    <property type="entry name" value="DXP_reductoisom"/>
    <property type="match status" value="1"/>
</dbReference>
<dbReference type="Pfam" id="PF13288">
    <property type="entry name" value="DXPR_C"/>
    <property type="match status" value="1"/>
</dbReference>
<dbReference type="PIRSF" id="PIRSF006205">
    <property type="entry name" value="Dxp_reductismrs"/>
    <property type="match status" value="1"/>
</dbReference>
<dbReference type="SUPFAM" id="SSF69055">
    <property type="entry name" value="1-deoxy-D-xylulose-5-phosphate reductoisomerase, C-terminal domain"/>
    <property type="match status" value="1"/>
</dbReference>
<dbReference type="SUPFAM" id="SSF55347">
    <property type="entry name" value="Glyceraldehyde-3-phosphate dehydrogenase-like, C-terminal domain"/>
    <property type="match status" value="1"/>
</dbReference>
<dbReference type="SUPFAM" id="SSF51735">
    <property type="entry name" value="NAD(P)-binding Rossmann-fold domains"/>
    <property type="match status" value="1"/>
</dbReference>
<gene>
    <name evidence="1" type="primary">dxr</name>
    <name type="ordered locus">WD_0992</name>
</gene>
<name>DXR_WOLPM</name>
<comment type="function">
    <text evidence="1">Catalyzes the NADPH-dependent rearrangement and reduction of 1-deoxy-D-xylulose-5-phosphate (DXP) to 2-C-methyl-D-erythritol 4-phosphate (MEP).</text>
</comment>
<comment type="catalytic activity">
    <reaction evidence="1">
        <text>2-C-methyl-D-erythritol 4-phosphate + NADP(+) = 1-deoxy-D-xylulose 5-phosphate + NADPH + H(+)</text>
        <dbReference type="Rhea" id="RHEA:13717"/>
        <dbReference type="ChEBI" id="CHEBI:15378"/>
        <dbReference type="ChEBI" id="CHEBI:57783"/>
        <dbReference type="ChEBI" id="CHEBI:57792"/>
        <dbReference type="ChEBI" id="CHEBI:58262"/>
        <dbReference type="ChEBI" id="CHEBI:58349"/>
        <dbReference type="EC" id="1.1.1.267"/>
    </reaction>
    <physiologicalReaction direction="right-to-left" evidence="1">
        <dbReference type="Rhea" id="RHEA:13719"/>
    </physiologicalReaction>
</comment>
<comment type="cofactor">
    <cofactor evidence="1">
        <name>Mg(2+)</name>
        <dbReference type="ChEBI" id="CHEBI:18420"/>
    </cofactor>
    <cofactor evidence="1">
        <name>Mn(2+)</name>
        <dbReference type="ChEBI" id="CHEBI:29035"/>
    </cofactor>
</comment>
<comment type="pathway">
    <text evidence="1">Isoprenoid biosynthesis; isopentenyl diphosphate biosynthesis via DXP pathway; isopentenyl diphosphate from 1-deoxy-D-xylulose 5-phosphate: step 1/6.</text>
</comment>
<comment type="similarity">
    <text evidence="1">Belongs to the DXR family.</text>
</comment>
<sequence>MKKVSVLGSTGSVGKKTVDLLSKRKEEYQVEALSAHSNFALLAHQAKLLNAKYVAISDERLYKDLKESLLGTDVKIAIGATNIATIPVDLSVVAIVGIAGLGPVMEVIESGTKVIALANKESIVCGGKLLLKKAKEKNVQIIPIDSEHNAIFQILQNDDKCVEKIILTASGGPFLNYSLEQLRNVMVDKALSHPTWNMGKKISVDSATMMNKALEIIEAHNLFNISPDKIEAIVHPESIVHGIVTYKDGFNFAVLAETDMAIPISYALSGPERSALNRKLDLTKQGKLTFQEPDHKRFPALKLSMAVLNSSAPQTNSIVLNAANEIAVNEFLKSRIGFLKIVEVVESTMESFGSYTDINSLSDIINIDYESRIIAHKIVESKVVAYS</sequence>
<reference key="1">
    <citation type="journal article" date="2004" name="PLoS Biol.">
        <title>Phylogenomics of the reproductive parasite Wolbachia pipientis wMel: a streamlined genome overrun by mobile genetic elements.</title>
        <authorList>
            <person name="Wu M."/>
            <person name="Sun L.V."/>
            <person name="Vamathevan J.J."/>
            <person name="Riegler M."/>
            <person name="DeBoy R.T."/>
            <person name="Brownlie J.C."/>
            <person name="McGraw E.A."/>
            <person name="Martin W."/>
            <person name="Esser C."/>
            <person name="Ahmadinejad N."/>
            <person name="Wiegand C."/>
            <person name="Madupu R."/>
            <person name="Beanan M.J."/>
            <person name="Brinkac L.M."/>
            <person name="Daugherty S.C."/>
            <person name="Durkin A.S."/>
            <person name="Kolonay J.F."/>
            <person name="Nelson W.C."/>
            <person name="Mohamoud Y."/>
            <person name="Lee P."/>
            <person name="Berry K.J."/>
            <person name="Young M.B."/>
            <person name="Utterback T.R."/>
            <person name="Weidman J.F."/>
            <person name="Nierman W.C."/>
            <person name="Paulsen I.T."/>
            <person name="Nelson K.E."/>
            <person name="Tettelin H."/>
            <person name="O'Neill S.L."/>
            <person name="Eisen J.A."/>
        </authorList>
    </citation>
    <scope>NUCLEOTIDE SEQUENCE [LARGE SCALE GENOMIC DNA]</scope>
</reference>
<proteinExistence type="inferred from homology"/>
<feature type="chain" id="PRO_0000163736" description="1-deoxy-D-xylulose 5-phosphate reductoisomerase">
    <location>
        <begin position="1"/>
        <end position="387"/>
    </location>
</feature>
<feature type="binding site" evidence="1">
    <location>
        <position position="10"/>
    </location>
    <ligand>
        <name>NADPH</name>
        <dbReference type="ChEBI" id="CHEBI:57783"/>
    </ligand>
</feature>
<feature type="binding site" evidence="1">
    <location>
        <position position="11"/>
    </location>
    <ligand>
        <name>NADPH</name>
        <dbReference type="ChEBI" id="CHEBI:57783"/>
    </ligand>
</feature>
<feature type="binding site" evidence="1">
    <location>
        <position position="12"/>
    </location>
    <ligand>
        <name>NADPH</name>
        <dbReference type="ChEBI" id="CHEBI:57783"/>
    </ligand>
</feature>
<feature type="binding site" evidence="1">
    <location>
        <position position="13"/>
    </location>
    <ligand>
        <name>NADPH</name>
        <dbReference type="ChEBI" id="CHEBI:57783"/>
    </ligand>
</feature>
<feature type="binding site" evidence="1">
    <location>
        <position position="38"/>
    </location>
    <ligand>
        <name>NADPH</name>
        <dbReference type="ChEBI" id="CHEBI:57783"/>
    </ligand>
</feature>
<feature type="binding site" evidence="1">
    <location>
        <position position="119"/>
    </location>
    <ligand>
        <name>NADPH</name>
        <dbReference type="ChEBI" id="CHEBI:57783"/>
    </ligand>
</feature>
<feature type="binding site" evidence="1">
    <location>
        <position position="120"/>
    </location>
    <ligand>
        <name>1-deoxy-D-xylulose 5-phosphate</name>
        <dbReference type="ChEBI" id="CHEBI:57792"/>
    </ligand>
</feature>
<feature type="binding site" evidence="1">
    <location>
        <position position="121"/>
    </location>
    <ligand>
        <name>NADPH</name>
        <dbReference type="ChEBI" id="CHEBI:57783"/>
    </ligand>
</feature>
<feature type="binding site" evidence="1">
    <location>
        <position position="145"/>
    </location>
    <ligand>
        <name>Mn(2+)</name>
        <dbReference type="ChEBI" id="CHEBI:29035"/>
    </ligand>
</feature>
<feature type="binding site" evidence="1">
    <location>
        <position position="146"/>
    </location>
    <ligand>
        <name>1-deoxy-D-xylulose 5-phosphate</name>
        <dbReference type="ChEBI" id="CHEBI:57792"/>
    </ligand>
</feature>
<feature type="binding site" evidence="1">
    <location>
        <position position="147"/>
    </location>
    <ligand>
        <name>1-deoxy-D-xylulose 5-phosphate</name>
        <dbReference type="ChEBI" id="CHEBI:57792"/>
    </ligand>
</feature>
<feature type="binding site" evidence="1">
    <location>
        <position position="147"/>
    </location>
    <ligand>
        <name>Mn(2+)</name>
        <dbReference type="ChEBI" id="CHEBI:29035"/>
    </ligand>
</feature>
<feature type="binding site" evidence="1">
    <location>
        <position position="170"/>
    </location>
    <ligand>
        <name>1-deoxy-D-xylulose 5-phosphate</name>
        <dbReference type="ChEBI" id="CHEBI:57792"/>
    </ligand>
</feature>
<feature type="binding site" evidence="1">
    <location>
        <position position="193"/>
    </location>
    <ligand>
        <name>1-deoxy-D-xylulose 5-phosphate</name>
        <dbReference type="ChEBI" id="CHEBI:57792"/>
    </ligand>
</feature>
<feature type="binding site" evidence="1">
    <location>
        <position position="199"/>
    </location>
    <ligand>
        <name>NADPH</name>
        <dbReference type="ChEBI" id="CHEBI:57783"/>
    </ligand>
</feature>
<feature type="binding site" evidence="1">
    <location>
        <position position="206"/>
    </location>
    <ligand>
        <name>1-deoxy-D-xylulose 5-phosphate</name>
        <dbReference type="ChEBI" id="CHEBI:57792"/>
    </ligand>
</feature>
<feature type="binding site" evidence="1">
    <location>
        <position position="211"/>
    </location>
    <ligand>
        <name>1-deoxy-D-xylulose 5-phosphate</name>
        <dbReference type="ChEBI" id="CHEBI:57792"/>
    </ligand>
</feature>
<feature type="binding site" evidence="1">
    <location>
        <position position="212"/>
    </location>
    <ligand>
        <name>1-deoxy-D-xylulose 5-phosphate</name>
        <dbReference type="ChEBI" id="CHEBI:57792"/>
    </ligand>
</feature>
<feature type="binding site" evidence="1">
    <location>
        <position position="215"/>
    </location>
    <ligand>
        <name>1-deoxy-D-xylulose 5-phosphate</name>
        <dbReference type="ChEBI" id="CHEBI:57792"/>
    </ligand>
</feature>
<feature type="binding site" evidence="1">
    <location>
        <position position="215"/>
    </location>
    <ligand>
        <name>Mn(2+)</name>
        <dbReference type="ChEBI" id="CHEBI:29035"/>
    </ligand>
</feature>
<evidence type="ECO:0000255" key="1">
    <source>
        <dbReference type="HAMAP-Rule" id="MF_00183"/>
    </source>
</evidence>